<reference key="1">
    <citation type="journal article" date="1986" name="Virology">
        <title>Nucleotide sequence and genetic map of the 16-kb vaccinia virus HindIII D fragment.</title>
        <authorList>
            <person name="Niles E.G."/>
            <person name="Condit R.C."/>
            <person name="Caro P."/>
            <person name="Davidson K."/>
            <person name="Matusick L."/>
            <person name="Seto J."/>
        </authorList>
    </citation>
    <scope>NUCLEOTIDE SEQUENCE [GENOMIC DNA]</scope>
</reference>
<proteinExistence type="predicted"/>
<dbReference type="EMBL" id="M15058">
    <property type="protein sequence ID" value="AAA48261.1"/>
    <property type="molecule type" value="Genomic_DNA"/>
</dbReference>
<dbReference type="PIR" id="A03881">
    <property type="entry name" value="QQVZ10"/>
</dbReference>
<protein>
    <recommendedName>
        <fullName>Uncharacterized 9.3 kDa protein</fullName>
    </recommendedName>
</protein>
<accession>P68480</accession>
<accession>P04307</accession>
<sequence>MNIYCRYSSLTLANFLCLLMKLSISCPNSLELKYLDIFCWKVVNGRVTTLSYNIYPFLERSVINGICFTELDTNRVPILR</sequence>
<name>YVDE_VACCW</name>
<feature type="chain" id="PRO_0000099693" description="Uncharacterized 9.3 kDa protein">
    <location>
        <begin position="1"/>
        <end position="80"/>
    </location>
</feature>
<organismHost>
    <name type="scientific">Bos taurus</name>
    <name type="common">Bovine</name>
    <dbReference type="NCBI Taxonomy" id="9913"/>
</organismHost>
<organism>
    <name type="scientific">Vaccinia virus (strain Western Reserve)</name>
    <name type="common">VACV</name>
    <name type="synonym">Vaccinia virus (strain WR)</name>
    <dbReference type="NCBI Taxonomy" id="10254"/>
    <lineage>
        <taxon>Viruses</taxon>
        <taxon>Varidnaviria</taxon>
        <taxon>Bamfordvirae</taxon>
        <taxon>Nucleocytoviricota</taxon>
        <taxon>Pokkesviricetes</taxon>
        <taxon>Chitovirales</taxon>
        <taxon>Poxviridae</taxon>
        <taxon>Chordopoxvirinae</taxon>
        <taxon>Orthopoxvirus</taxon>
        <taxon>Vaccinia virus</taxon>
    </lineage>
</organism>
<gene>
    <name type="ORF">D ORF E</name>
</gene>